<evidence type="ECO:0000255" key="1">
    <source>
        <dbReference type="HAMAP-Rule" id="MF_00092"/>
    </source>
</evidence>
<comment type="function">
    <text evidence="1">Endonuclease that is involved in the suppression of homologous recombination and thus may have a key role in the control of bacterial genetic diversity.</text>
</comment>
<comment type="function">
    <text evidence="1">Acts as a ribosome collision sensor, splitting the ribosome into its 2 subunits. Detects stalled/collided 70S ribosomes which it binds and splits by an ATP-hydrolysis driven conformational change. Acts upstream of the ribosome quality control system (RQC), a ribosome-associated complex that mediates the extraction of incompletely synthesized nascent chains from stalled ribosomes and their subsequent degradation. Probably generates substrates for RQC.</text>
</comment>
<comment type="subunit">
    <text evidence="1">Homodimer. Binds to stalled ribosomes, contacting rRNA.</text>
</comment>
<comment type="similarity">
    <text evidence="1">Belongs to the DNA mismatch repair MutS family. MutS2 subfamily.</text>
</comment>
<protein>
    <recommendedName>
        <fullName evidence="1">Endonuclease MutS2</fullName>
        <ecNumber evidence="1">3.1.-.-</ecNumber>
    </recommendedName>
    <alternativeName>
        <fullName evidence="1">Ribosome-associated protein quality control-upstream factor</fullName>
        <shortName evidence="1">RQC-upstream factor</shortName>
        <shortName evidence="1">RqcU</shortName>
        <ecNumber evidence="1">3.6.4.-</ecNumber>
    </alternativeName>
</protein>
<accession>A0AHX3</accession>
<keyword id="KW-0067">ATP-binding</keyword>
<keyword id="KW-0238">DNA-binding</keyword>
<keyword id="KW-0255">Endonuclease</keyword>
<keyword id="KW-0378">Hydrolase</keyword>
<keyword id="KW-0540">Nuclease</keyword>
<keyword id="KW-0547">Nucleotide-binding</keyword>
<keyword id="KW-0694">RNA-binding</keyword>
<keyword id="KW-0699">rRNA-binding</keyword>
<feature type="chain" id="PRO_1000075478" description="Endonuclease MutS2">
    <location>
        <begin position="1"/>
        <end position="785"/>
    </location>
</feature>
<feature type="domain" description="Smr" evidence="1">
    <location>
        <begin position="710"/>
        <end position="785"/>
    </location>
</feature>
<feature type="binding site" evidence="1">
    <location>
        <begin position="335"/>
        <end position="342"/>
    </location>
    <ligand>
        <name>ATP</name>
        <dbReference type="ChEBI" id="CHEBI:30616"/>
    </ligand>
</feature>
<name>MUTS2_LISW6</name>
<reference key="1">
    <citation type="journal article" date="2006" name="J. Bacteriol.">
        <title>Whole-genome sequence of Listeria welshimeri reveals common steps in genome reduction with Listeria innocua as compared to Listeria monocytogenes.</title>
        <authorList>
            <person name="Hain T."/>
            <person name="Steinweg C."/>
            <person name="Kuenne C.T."/>
            <person name="Billion A."/>
            <person name="Ghai R."/>
            <person name="Chatterjee S.S."/>
            <person name="Domann E."/>
            <person name="Kaerst U."/>
            <person name="Goesmann A."/>
            <person name="Bekel T."/>
            <person name="Bartels D."/>
            <person name="Kaiser O."/>
            <person name="Meyer F."/>
            <person name="Puehler A."/>
            <person name="Weisshaar B."/>
            <person name="Wehland J."/>
            <person name="Liang C."/>
            <person name="Dandekar T."/>
            <person name="Lampidis R."/>
            <person name="Kreft J."/>
            <person name="Goebel W."/>
            <person name="Chakraborty T."/>
        </authorList>
    </citation>
    <scope>NUCLEOTIDE SEQUENCE [LARGE SCALE GENOMIC DNA]</scope>
    <source>
        <strain>ATCC 35897 / DSM 20650 / CCUG 15529 / CIP 8149 / NCTC 11857 / SLCC 5334 / V8</strain>
    </source>
</reference>
<sequence length="785" mass="86842">MEKKVEAILEFDKIKKQLTEFASSSLGEQAILELAPATNFQVVQKSQLETEEGAKIIRLRGSAPITGLTDVFAHLKRLEIGGDLNGLEIYQIGSNLRVSRQMKNFMTDLLEMGVELPLLGALSDELLVLKEVEEDIAISVDESGKILDTASEALSTIRRTLRRTEDRVREKLESYLRDRNASKMLSDAVITIRNDRYVIPVKQEYKGHYGGIVHDQSASGQTLFIEPQSVVDLNNERKALQAKEKQEIERILAEISASLAGWINEIHHNTFILGRYDFIFAKARFGKAMKAVTPHLSDAGIVHLIAARHPLLDAANVVANDIYLGEDFTTIVITGPNTGGKTITLKTLGLLTLMAQSGLQIPAQEDSTIAVFEHVFADIGDEQSIEQSLSTFSSHMTNIVSILEKVNHKSLILYDELGAGTDPQEGAALAIAILDASHEKGASVVATTHYPELKAYGYNRVHATNASVEFNVETLSPTYKLLIGVPGRSNAFDISRRLGLSENIITEARSLVDTESADLNDMISSLEEKRNLAETEYEEARELARGADALLKDLQKEITNYYQQKDKLMEQAREKAANIVTKAEVEAEEIIHELRTMQLNGAAGIKEHELIDAKTRLGKAKPKTINKTIPQAPKQKPHVFQVGDNVRVLSLGQKGTLLNKISDKEWNVQIGIIKMKIKTTDLEYIQPETPKKQRIITSVHSSDSPVKSELDLRGERYEDALQKVDKYLDEALLAGYPQVAIIHGKGTGALRTGVTEYLKNHRMVKSIRFGAAAEGGNGVTIVEFK</sequence>
<gene>
    <name evidence="1" type="primary">mutS2</name>
    <name evidence="1" type="synonym">rqcU</name>
    <name type="ordered locus">lwe1187</name>
</gene>
<dbReference type="EC" id="3.1.-.-" evidence="1"/>
<dbReference type="EC" id="3.6.4.-" evidence="1"/>
<dbReference type="EMBL" id="AM263198">
    <property type="protein sequence ID" value="CAK20605.1"/>
    <property type="molecule type" value="Genomic_DNA"/>
</dbReference>
<dbReference type="RefSeq" id="WP_011702001.1">
    <property type="nucleotide sequence ID" value="NC_008555.1"/>
</dbReference>
<dbReference type="SMR" id="A0AHX3"/>
<dbReference type="STRING" id="386043.lwe1187"/>
<dbReference type="GeneID" id="61189070"/>
<dbReference type="KEGG" id="lwe:lwe1187"/>
<dbReference type="eggNOG" id="COG1193">
    <property type="taxonomic scope" value="Bacteria"/>
</dbReference>
<dbReference type="HOGENOM" id="CLU_011252_2_1_9"/>
<dbReference type="OrthoDB" id="9808166at2"/>
<dbReference type="Proteomes" id="UP000000779">
    <property type="component" value="Chromosome"/>
</dbReference>
<dbReference type="GO" id="GO:0005524">
    <property type="term" value="F:ATP binding"/>
    <property type="evidence" value="ECO:0007669"/>
    <property type="project" value="UniProtKB-UniRule"/>
</dbReference>
<dbReference type="GO" id="GO:0016887">
    <property type="term" value="F:ATP hydrolysis activity"/>
    <property type="evidence" value="ECO:0007669"/>
    <property type="project" value="InterPro"/>
</dbReference>
<dbReference type="GO" id="GO:0140664">
    <property type="term" value="F:ATP-dependent DNA damage sensor activity"/>
    <property type="evidence" value="ECO:0007669"/>
    <property type="project" value="InterPro"/>
</dbReference>
<dbReference type="GO" id="GO:0004519">
    <property type="term" value="F:endonuclease activity"/>
    <property type="evidence" value="ECO:0007669"/>
    <property type="project" value="UniProtKB-UniRule"/>
</dbReference>
<dbReference type="GO" id="GO:0030983">
    <property type="term" value="F:mismatched DNA binding"/>
    <property type="evidence" value="ECO:0007669"/>
    <property type="project" value="InterPro"/>
</dbReference>
<dbReference type="GO" id="GO:0043023">
    <property type="term" value="F:ribosomal large subunit binding"/>
    <property type="evidence" value="ECO:0007669"/>
    <property type="project" value="UniProtKB-UniRule"/>
</dbReference>
<dbReference type="GO" id="GO:0019843">
    <property type="term" value="F:rRNA binding"/>
    <property type="evidence" value="ECO:0007669"/>
    <property type="project" value="UniProtKB-UniRule"/>
</dbReference>
<dbReference type="GO" id="GO:0006298">
    <property type="term" value="P:mismatch repair"/>
    <property type="evidence" value="ECO:0007669"/>
    <property type="project" value="InterPro"/>
</dbReference>
<dbReference type="GO" id="GO:0045910">
    <property type="term" value="P:negative regulation of DNA recombination"/>
    <property type="evidence" value="ECO:0007669"/>
    <property type="project" value="InterPro"/>
</dbReference>
<dbReference type="GO" id="GO:0072344">
    <property type="term" value="P:rescue of stalled ribosome"/>
    <property type="evidence" value="ECO:0007669"/>
    <property type="project" value="UniProtKB-UniRule"/>
</dbReference>
<dbReference type="FunFam" id="3.40.50.300:FF:000830">
    <property type="entry name" value="Endonuclease MutS2"/>
    <property type="match status" value="1"/>
</dbReference>
<dbReference type="Gene3D" id="3.30.1370.110">
    <property type="match status" value="1"/>
</dbReference>
<dbReference type="Gene3D" id="3.40.50.300">
    <property type="entry name" value="P-loop containing nucleotide triphosphate hydrolases"/>
    <property type="match status" value="1"/>
</dbReference>
<dbReference type="HAMAP" id="MF_00092">
    <property type="entry name" value="MutS2"/>
    <property type="match status" value="1"/>
</dbReference>
<dbReference type="InterPro" id="IPR000432">
    <property type="entry name" value="DNA_mismatch_repair_MutS_C"/>
</dbReference>
<dbReference type="InterPro" id="IPR007696">
    <property type="entry name" value="DNA_mismatch_repair_MutS_core"/>
</dbReference>
<dbReference type="InterPro" id="IPR036187">
    <property type="entry name" value="DNA_mismatch_repair_MutS_sf"/>
</dbReference>
<dbReference type="InterPro" id="IPR046893">
    <property type="entry name" value="MSSS"/>
</dbReference>
<dbReference type="InterPro" id="IPR045076">
    <property type="entry name" value="MutS"/>
</dbReference>
<dbReference type="InterPro" id="IPR005747">
    <property type="entry name" value="MutS2"/>
</dbReference>
<dbReference type="InterPro" id="IPR027417">
    <property type="entry name" value="P-loop_NTPase"/>
</dbReference>
<dbReference type="InterPro" id="IPR002625">
    <property type="entry name" value="Smr_dom"/>
</dbReference>
<dbReference type="InterPro" id="IPR036063">
    <property type="entry name" value="Smr_dom_sf"/>
</dbReference>
<dbReference type="NCBIfam" id="TIGR01069">
    <property type="entry name" value="mutS2"/>
    <property type="match status" value="1"/>
</dbReference>
<dbReference type="PANTHER" id="PTHR48466:SF2">
    <property type="entry name" value="OS10G0509000 PROTEIN"/>
    <property type="match status" value="1"/>
</dbReference>
<dbReference type="PANTHER" id="PTHR48466">
    <property type="entry name" value="OS10G0509000 PROTEIN-RELATED"/>
    <property type="match status" value="1"/>
</dbReference>
<dbReference type="Pfam" id="PF20297">
    <property type="entry name" value="MSSS"/>
    <property type="match status" value="1"/>
</dbReference>
<dbReference type="Pfam" id="PF00488">
    <property type="entry name" value="MutS_V"/>
    <property type="match status" value="1"/>
</dbReference>
<dbReference type="Pfam" id="PF01713">
    <property type="entry name" value="Smr"/>
    <property type="match status" value="1"/>
</dbReference>
<dbReference type="PIRSF" id="PIRSF005814">
    <property type="entry name" value="MutS_YshD"/>
    <property type="match status" value="1"/>
</dbReference>
<dbReference type="SMART" id="SM00534">
    <property type="entry name" value="MUTSac"/>
    <property type="match status" value="1"/>
</dbReference>
<dbReference type="SMART" id="SM00533">
    <property type="entry name" value="MUTSd"/>
    <property type="match status" value="1"/>
</dbReference>
<dbReference type="SMART" id="SM00463">
    <property type="entry name" value="SMR"/>
    <property type="match status" value="1"/>
</dbReference>
<dbReference type="SUPFAM" id="SSF48334">
    <property type="entry name" value="DNA repair protein MutS, domain III"/>
    <property type="match status" value="1"/>
</dbReference>
<dbReference type="SUPFAM" id="SSF52540">
    <property type="entry name" value="P-loop containing nucleoside triphosphate hydrolases"/>
    <property type="match status" value="1"/>
</dbReference>
<dbReference type="SUPFAM" id="SSF160443">
    <property type="entry name" value="SMR domain-like"/>
    <property type="match status" value="1"/>
</dbReference>
<dbReference type="PROSITE" id="PS00486">
    <property type="entry name" value="DNA_MISMATCH_REPAIR_2"/>
    <property type="match status" value="1"/>
</dbReference>
<dbReference type="PROSITE" id="PS50828">
    <property type="entry name" value="SMR"/>
    <property type="match status" value="1"/>
</dbReference>
<proteinExistence type="inferred from homology"/>
<organism>
    <name type="scientific">Listeria welshimeri serovar 6b (strain ATCC 35897 / DSM 20650 / CCUG 15529 / CIP 8149 / NCTC 11857 / SLCC 5334 / V8)</name>
    <dbReference type="NCBI Taxonomy" id="386043"/>
    <lineage>
        <taxon>Bacteria</taxon>
        <taxon>Bacillati</taxon>
        <taxon>Bacillota</taxon>
        <taxon>Bacilli</taxon>
        <taxon>Bacillales</taxon>
        <taxon>Listeriaceae</taxon>
        <taxon>Listeria</taxon>
    </lineage>
</organism>